<name>CXL16_PIG</name>
<dbReference type="EMBL" id="AF277000">
    <property type="protein sequence ID" value="AAG31753.1"/>
    <property type="molecule type" value="mRNA"/>
</dbReference>
<dbReference type="RefSeq" id="NP_998976.1">
    <property type="nucleotide sequence ID" value="NM_213811.1"/>
</dbReference>
<dbReference type="FunCoup" id="Q9GKE2">
    <property type="interactions" value="110"/>
</dbReference>
<dbReference type="STRING" id="9823.ENSSSCP00000055055"/>
<dbReference type="GlyGen" id="Q9GKE2">
    <property type="glycosylation" value="1 site"/>
</dbReference>
<dbReference type="PaxDb" id="9823-ENSSSCP00000029924"/>
<dbReference type="Ensembl" id="ENSSSCT00025011216.1">
    <property type="protein sequence ID" value="ENSSSCP00025004502.1"/>
    <property type="gene ID" value="ENSSSCG00025008424.1"/>
</dbReference>
<dbReference type="Ensembl" id="ENSSSCT00045048794.1">
    <property type="protein sequence ID" value="ENSSSCP00045033934.1"/>
    <property type="gene ID" value="ENSSSCG00045028497.1"/>
</dbReference>
<dbReference type="Ensembl" id="ENSSSCT00055050019.1">
    <property type="protein sequence ID" value="ENSSSCP00055039962.1"/>
    <property type="gene ID" value="ENSSSCG00055025229.1"/>
</dbReference>
<dbReference type="Ensembl" id="ENSSSCT00115027397">
    <property type="protein sequence ID" value="ENSSSCP00115025967"/>
    <property type="gene ID" value="ENSSSCG00115015692"/>
</dbReference>
<dbReference type="GeneID" id="396735"/>
<dbReference type="KEGG" id="ssc:396735"/>
<dbReference type="CTD" id="58191"/>
<dbReference type="eggNOG" id="ENOG502T0B7">
    <property type="taxonomic scope" value="Eukaryota"/>
</dbReference>
<dbReference type="HOGENOM" id="CLU_049889_0_0_1"/>
<dbReference type="InParanoid" id="Q9GKE2"/>
<dbReference type="OrthoDB" id="9836360at2759"/>
<dbReference type="Reactome" id="R-SSC-380108">
    <property type="pathway name" value="Chemokine receptors bind chemokines"/>
</dbReference>
<dbReference type="Reactome" id="R-SSC-418594">
    <property type="pathway name" value="G alpha (i) signalling events"/>
</dbReference>
<dbReference type="Proteomes" id="UP000008227">
    <property type="component" value="Unplaced"/>
</dbReference>
<dbReference type="Proteomes" id="UP000314985">
    <property type="component" value="Unplaced"/>
</dbReference>
<dbReference type="Proteomes" id="UP000694570">
    <property type="component" value="Unplaced"/>
</dbReference>
<dbReference type="Proteomes" id="UP000694571">
    <property type="component" value="Unplaced"/>
</dbReference>
<dbReference type="Proteomes" id="UP000694720">
    <property type="component" value="Unplaced"/>
</dbReference>
<dbReference type="Proteomes" id="UP000694722">
    <property type="component" value="Unplaced"/>
</dbReference>
<dbReference type="Proteomes" id="UP000694723">
    <property type="component" value="Unplaced"/>
</dbReference>
<dbReference type="Proteomes" id="UP000694724">
    <property type="component" value="Unplaced"/>
</dbReference>
<dbReference type="Proteomes" id="UP000694725">
    <property type="component" value="Unplaced"/>
</dbReference>
<dbReference type="Proteomes" id="UP000694726">
    <property type="component" value="Unplaced"/>
</dbReference>
<dbReference type="Proteomes" id="UP000694727">
    <property type="component" value="Unplaced"/>
</dbReference>
<dbReference type="Proteomes" id="UP000694728">
    <property type="component" value="Unplaced"/>
</dbReference>
<dbReference type="GO" id="GO:0005615">
    <property type="term" value="C:extracellular space"/>
    <property type="evidence" value="ECO:0000318"/>
    <property type="project" value="GO_Central"/>
</dbReference>
<dbReference type="GO" id="GO:0016020">
    <property type="term" value="C:membrane"/>
    <property type="evidence" value="ECO:0007669"/>
    <property type="project" value="UniProtKB-SubCell"/>
</dbReference>
<dbReference type="GO" id="GO:0008009">
    <property type="term" value="F:chemokine activity"/>
    <property type="evidence" value="ECO:0000318"/>
    <property type="project" value="GO_Central"/>
</dbReference>
<dbReference type="GO" id="GO:0005041">
    <property type="term" value="F:low-density lipoprotein particle receptor activity"/>
    <property type="evidence" value="ECO:0000318"/>
    <property type="project" value="GO_Central"/>
</dbReference>
<dbReference type="GO" id="GO:0005044">
    <property type="term" value="F:scavenger receptor activity"/>
    <property type="evidence" value="ECO:0000318"/>
    <property type="project" value="GO_Central"/>
</dbReference>
<dbReference type="GO" id="GO:0030307">
    <property type="term" value="P:positive regulation of cell growth"/>
    <property type="evidence" value="ECO:0007669"/>
    <property type="project" value="InterPro"/>
</dbReference>
<dbReference type="GO" id="GO:0030335">
    <property type="term" value="P:positive regulation of cell migration"/>
    <property type="evidence" value="ECO:0000318"/>
    <property type="project" value="GO_Central"/>
</dbReference>
<dbReference type="GO" id="GO:0006898">
    <property type="term" value="P:receptor-mediated endocytosis"/>
    <property type="evidence" value="ECO:0007669"/>
    <property type="project" value="InterPro"/>
</dbReference>
<dbReference type="GO" id="GO:0034612">
    <property type="term" value="P:response to tumor necrosis factor"/>
    <property type="evidence" value="ECO:0007669"/>
    <property type="project" value="InterPro"/>
</dbReference>
<dbReference type="GO" id="GO:0034341">
    <property type="term" value="P:response to type II interferon"/>
    <property type="evidence" value="ECO:0007669"/>
    <property type="project" value="InterPro"/>
</dbReference>
<dbReference type="GO" id="GO:0010818">
    <property type="term" value="P:T cell chemotaxis"/>
    <property type="evidence" value="ECO:0000318"/>
    <property type="project" value="GO_Central"/>
</dbReference>
<dbReference type="InterPro" id="IPR026296">
    <property type="entry name" value="CXCL16"/>
</dbReference>
<dbReference type="InterPro" id="IPR048585">
    <property type="entry name" value="CXCL16_dom"/>
</dbReference>
<dbReference type="PANTHER" id="PTHR14385:SF0">
    <property type="entry name" value="C-X-C MOTIF CHEMOKINE 16"/>
    <property type="match status" value="1"/>
</dbReference>
<dbReference type="PANTHER" id="PTHR14385">
    <property type="entry name" value="CXC CHEMOKINE LIGAND"/>
    <property type="match status" value="1"/>
</dbReference>
<dbReference type="Pfam" id="PF20902">
    <property type="entry name" value="CXCL16"/>
    <property type="match status" value="1"/>
</dbReference>
<organism>
    <name type="scientific">Sus scrofa</name>
    <name type="common">Pig</name>
    <dbReference type="NCBI Taxonomy" id="9823"/>
    <lineage>
        <taxon>Eukaryota</taxon>
        <taxon>Metazoa</taxon>
        <taxon>Chordata</taxon>
        <taxon>Craniata</taxon>
        <taxon>Vertebrata</taxon>
        <taxon>Euteleostomi</taxon>
        <taxon>Mammalia</taxon>
        <taxon>Eutheria</taxon>
        <taxon>Laurasiatheria</taxon>
        <taxon>Artiodactyla</taxon>
        <taxon>Suina</taxon>
        <taxon>Suidae</taxon>
        <taxon>Sus</taxon>
    </lineage>
</organism>
<accession>Q9GKE2</accession>
<comment type="function">
    <text evidence="1">Induces a strong chemotactic response. Induces calcium mobilization. Binds to CXCR6/Bonzo. Also acts as a scavenger receptor on macrophages, which specifically binds to OxLDL (oxidized low density lipoprotein), suggesting that it may be involved in pathophysiology such as atherogenesis (By similarity).</text>
</comment>
<comment type="subcellular location">
    <subcellularLocation>
        <location evidence="4">Membrane</location>
        <topology evidence="4">Single-pass type I membrane protein</topology>
    </subcellularLocation>
</comment>
<comment type="PTM">
    <text evidence="1">Glycosylated.</text>
</comment>
<comment type="similarity">
    <text evidence="4">Belongs to the intercrine alpha (chemokine CxC) family.</text>
</comment>
<sequence>MPLWELWFFLLALFLAWLTPPGNGNEGSMAGSCPCNRRISSHSPPTDHDMRHLRKYLNHYQHCTSYVRFQLPRGSVCGGSSDQWVLKLMGCFDRGECGRAHARTVAHQQHLAPQNTRVPELPERAPPDSSTPAQTNLPSTLQPTQKPTLPEGMPSLAKKLIPTSETDTSTVGHSLGAKSEARENQEQLGKNVGATAGTSALVPVLSLLVIIFLLTGVLLYVMCKKRQEQSRQYPPDPQLHYVPVASNINT</sequence>
<reference key="1">
    <citation type="journal article" date="2000" name="J. Biol. Chem.">
        <title>Molecular cloning of a novel scavenger receptor for oxidized low density lipoprotein, SR-PSOX, on macrophages.</title>
        <authorList>
            <person name="Shimaoka T."/>
            <person name="Kume N."/>
            <person name="Minami M."/>
            <person name="Hayashida K."/>
            <person name="Kataoka H."/>
            <person name="Kita T."/>
            <person name="Yonehara S."/>
        </authorList>
    </citation>
    <scope>NUCLEOTIDE SEQUENCE [MRNA]</scope>
</reference>
<protein>
    <recommendedName>
        <fullName>C-X-C motif chemokine 16</fullName>
    </recommendedName>
    <alternativeName>
        <fullName>Transmembrane chemokine CXCL16</fullName>
    </alternativeName>
</protein>
<gene>
    <name type="primary">CXCL16</name>
</gene>
<evidence type="ECO:0000250" key="1"/>
<evidence type="ECO:0000255" key="2"/>
<evidence type="ECO:0000256" key="3">
    <source>
        <dbReference type="SAM" id="MobiDB-lite"/>
    </source>
</evidence>
<evidence type="ECO:0000305" key="4"/>
<keyword id="KW-0145">Chemotaxis</keyword>
<keyword id="KW-0202">Cytokine</keyword>
<keyword id="KW-1015">Disulfide bond</keyword>
<keyword id="KW-0325">Glycoprotein</keyword>
<keyword id="KW-0472">Membrane</keyword>
<keyword id="KW-1185">Reference proteome</keyword>
<keyword id="KW-0732">Signal</keyword>
<keyword id="KW-0812">Transmembrane</keyword>
<keyword id="KW-1133">Transmembrane helix</keyword>
<feature type="signal peptide" evidence="2">
    <location>
        <begin position="1"/>
        <end position="24"/>
    </location>
</feature>
<feature type="chain" id="PRO_0000378192" description="C-X-C motif chemokine 16">
    <location>
        <begin position="25"/>
        <end position="250"/>
    </location>
</feature>
<feature type="topological domain" description="Extracellular" evidence="2">
    <location>
        <begin position="25"/>
        <end position="200"/>
    </location>
</feature>
<feature type="transmembrane region" description="Helical" evidence="2">
    <location>
        <begin position="201"/>
        <end position="221"/>
    </location>
</feature>
<feature type="topological domain" description="Cytoplasmic" evidence="2">
    <location>
        <begin position="222"/>
        <end position="250"/>
    </location>
</feature>
<feature type="region of interest" description="Disordered" evidence="3">
    <location>
        <begin position="105"/>
        <end position="186"/>
    </location>
</feature>
<feature type="compositionally biased region" description="Polar residues" evidence="3">
    <location>
        <begin position="128"/>
        <end position="147"/>
    </location>
</feature>
<feature type="compositionally biased region" description="Polar residues" evidence="3">
    <location>
        <begin position="163"/>
        <end position="172"/>
    </location>
</feature>
<feature type="disulfide bond" evidence="1">
    <location>
        <begin position="33"/>
        <end position="63"/>
    </location>
</feature>
<feature type="disulfide bond" evidence="1">
    <location>
        <begin position="35"/>
        <end position="77"/>
    </location>
</feature>
<proteinExistence type="evidence at transcript level"/>